<name>WHIA_STRA5</name>
<proteinExistence type="inferred from homology"/>
<feature type="chain" id="PRO_0000376572" description="Probable cell division protein WhiA">
    <location>
        <begin position="1"/>
        <end position="303"/>
    </location>
</feature>
<feature type="DNA-binding region" description="H-T-H motif" evidence="1">
    <location>
        <begin position="272"/>
        <end position="303"/>
    </location>
</feature>
<sequence length="303" mass="34381">MSFTVKVKEELLGHKSENKMELSAIIKMSGSLGLANHGLNLSITTENAKIARHIYSMLEEHYHLQPEIKYHQKTNLRKNRVYTVFIEEKVDVILADLKLADAFFGIETGIEHSILDNDENGRAYLRGAFLSTGTVREPDSGKYQLEIFSVYLDHAQDLANLMKKFMLDAKVIEHKHGAVTYLQKAEDIMDFLIVIDAMEARDAFEEIKMIRETRNDINRANNVETANIARTITASMKTINNIIKIMDTIGFDALPSDLRQVAQVRVAHPDYSIQQIADSLETPLSKSGVNHRLRKINKIADEL</sequence>
<reference key="1">
    <citation type="journal article" date="2002" name="Proc. Natl. Acad. Sci. U.S.A.">
        <title>Complete genome sequence and comparative genomic analysis of an emerging human pathogen, serotype V Streptococcus agalactiae.</title>
        <authorList>
            <person name="Tettelin H."/>
            <person name="Masignani V."/>
            <person name="Cieslewicz M.J."/>
            <person name="Eisen J.A."/>
            <person name="Peterson S.N."/>
            <person name="Wessels M.R."/>
            <person name="Paulsen I.T."/>
            <person name="Nelson K.E."/>
            <person name="Margarit I."/>
            <person name="Read T.D."/>
            <person name="Madoff L.C."/>
            <person name="Wolf A.M."/>
            <person name="Beanan M.J."/>
            <person name="Brinkac L.M."/>
            <person name="Daugherty S.C."/>
            <person name="DeBoy R.T."/>
            <person name="Durkin A.S."/>
            <person name="Kolonay J.F."/>
            <person name="Madupu R."/>
            <person name="Lewis M.R."/>
            <person name="Radune D."/>
            <person name="Fedorova N.B."/>
            <person name="Scanlan D."/>
            <person name="Khouri H.M."/>
            <person name="Mulligan S."/>
            <person name="Carty H.A."/>
            <person name="Cline R.T."/>
            <person name="Van Aken S.E."/>
            <person name="Gill J."/>
            <person name="Scarselli M."/>
            <person name="Mora M."/>
            <person name="Iacobini E.T."/>
            <person name="Brettoni C."/>
            <person name="Galli G."/>
            <person name="Mariani M."/>
            <person name="Vegni F."/>
            <person name="Maione D."/>
            <person name="Rinaudo D."/>
            <person name="Rappuoli R."/>
            <person name="Telford J.L."/>
            <person name="Kasper D.L."/>
            <person name="Grandi G."/>
            <person name="Fraser C.M."/>
        </authorList>
    </citation>
    <scope>NUCLEOTIDE SEQUENCE [LARGE SCALE GENOMIC DNA]</scope>
    <source>
        <strain>ATCC BAA-611 / 2603 V/R</strain>
    </source>
</reference>
<organism>
    <name type="scientific">Streptococcus agalactiae serotype V (strain ATCC BAA-611 / 2603 V/R)</name>
    <dbReference type="NCBI Taxonomy" id="208435"/>
    <lineage>
        <taxon>Bacteria</taxon>
        <taxon>Bacillati</taxon>
        <taxon>Bacillota</taxon>
        <taxon>Bacilli</taxon>
        <taxon>Lactobacillales</taxon>
        <taxon>Streptococcaceae</taxon>
        <taxon>Streptococcus</taxon>
    </lineage>
</organism>
<protein>
    <recommendedName>
        <fullName evidence="1">Probable cell division protein WhiA</fullName>
    </recommendedName>
</protein>
<dbReference type="EMBL" id="AE009948">
    <property type="protein sequence ID" value="AAM99434.1"/>
    <property type="molecule type" value="Genomic_DNA"/>
</dbReference>
<dbReference type="RefSeq" id="NP_687562.1">
    <property type="nucleotide sequence ID" value="NC_004116.1"/>
</dbReference>
<dbReference type="RefSeq" id="WP_000011316.1">
    <property type="nucleotide sequence ID" value="NC_004116.1"/>
</dbReference>
<dbReference type="SMR" id="Q8E130"/>
<dbReference type="STRING" id="208435.SAG0533"/>
<dbReference type="GeneID" id="66885514"/>
<dbReference type="KEGG" id="sag:SAG0533"/>
<dbReference type="PATRIC" id="fig|208435.3.peg.529"/>
<dbReference type="HOGENOM" id="CLU_053282_0_0_9"/>
<dbReference type="OrthoDB" id="401278at2"/>
<dbReference type="Proteomes" id="UP000000821">
    <property type="component" value="Chromosome"/>
</dbReference>
<dbReference type="GO" id="GO:0003677">
    <property type="term" value="F:DNA binding"/>
    <property type="evidence" value="ECO:0007669"/>
    <property type="project" value="UniProtKB-UniRule"/>
</dbReference>
<dbReference type="GO" id="GO:0051301">
    <property type="term" value="P:cell division"/>
    <property type="evidence" value="ECO:0007669"/>
    <property type="project" value="UniProtKB-UniRule"/>
</dbReference>
<dbReference type="GO" id="GO:0043937">
    <property type="term" value="P:regulation of sporulation"/>
    <property type="evidence" value="ECO:0007669"/>
    <property type="project" value="InterPro"/>
</dbReference>
<dbReference type="Gene3D" id="3.10.28.10">
    <property type="entry name" value="Homing endonucleases"/>
    <property type="match status" value="1"/>
</dbReference>
<dbReference type="HAMAP" id="MF_01420">
    <property type="entry name" value="HTH_type_WhiA"/>
    <property type="match status" value="1"/>
</dbReference>
<dbReference type="InterPro" id="IPR027434">
    <property type="entry name" value="Homing_endonucl"/>
</dbReference>
<dbReference type="InterPro" id="IPR018478">
    <property type="entry name" value="Sporu_reg_WhiA_N_dom"/>
</dbReference>
<dbReference type="InterPro" id="IPR003802">
    <property type="entry name" value="Sporulation_regulator_WhiA"/>
</dbReference>
<dbReference type="InterPro" id="IPR023054">
    <property type="entry name" value="Sporulation_regulator_WhiA_C"/>
</dbReference>
<dbReference type="InterPro" id="IPR039518">
    <property type="entry name" value="WhiA_LAGLIDADG_dom"/>
</dbReference>
<dbReference type="NCBIfam" id="TIGR00647">
    <property type="entry name" value="DNA_bind_WhiA"/>
    <property type="match status" value="1"/>
</dbReference>
<dbReference type="PANTHER" id="PTHR37307">
    <property type="entry name" value="CELL DIVISION PROTEIN WHIA-RELATED"/>
    <property type="match status" value="1"/>
</dbReference>
<dbReference type="PANTHER" id="PTHR37307:SF1">
    <property type="entry name" value="CELL DIVISION PROTEIN WHIA-RELATED"/>
    <property type="match status" value="1"/>
</dbReference>
<dbReference type="Pfam" id="PF02650">
    <property type="entry name" value="HTH_WhiA"/>
    <property type="match status" value="1"/>
</dbReference>
<dbReference type="Pfam" id="PF14527">
    <property type="entry name" value="LAGLIDADG_WhiA"/>
    <property type="match status" value="1"/>
</dbReference>
<dbReference type="Pfam" id="PF10298">
    <property type="entry name" value="WhiA_N"/>
    <property type="match status" value="1"/>
</dbReference>
<dbReference type="SUPFAM" id="SSF55608">
    <property type="entry name" value="Homing endonucleases"/>
    <property type="match status" value="1"/>
</dbReference>
<gene>
    <name evidence="1" type="primary">whiA</name>
    <name type="ordered locus">SAG0533</name>
</gene>
<accession>Q8E130</accession>
<comment type="function">
    <text evidence="1">Involved in cell division and chromosome segregation.</text>
</comment>
<comment type="similarity">
    <text evidence="1">Belongs to the WhiA family.</text>
</comment>
<evidence type="ECO:0000255" key="1">
    <source>
        <dbReference type="HAMAP-Rule" id="MF_01420"/>
    </source>
</evidence>
<keyword id="KW-0131">Cell cycle</keyword>
<keyword id="KW-0132">Cell division</keyword>
<keyword id="KW-0238">DNA-binding</keyword>
<keyword id="KW-1185">Reference proteome</keyword>